<organism>
    <name type="scientific">Staphylococcus aureus (strain MW2)</name>
    <dbReference type="NCBI Taxonomy" id="196620"/>
    <lineage>
        <taxon>Bacteria</taxon>
        <taxon>Bacillati</taxon>
        <taxon>Bacillota</taxon>
        <taxon>Bacilli</taxon>
        <taxon>Bacillales</taxon>
        <taxon>Staphylococcaceae</taxon>
        <taxon>Staphylococcus</taxon>
    </lineage>
</organism>
<gene>
    <name type="primary">azo1</name>
    <name type="ordered locus">MW0515</name>
</gene>
<evidence type="ECO:0000250" key="1"/>
<evidence type="ECO:0000305" key="2"/>
<sequence>MKGLIIIGSAQVNSHTSALARYLTEHFKTHDIEAEIFDLAEKPLNQLDFSGTTPSIDEIKQNMKDLKEKAMAADFLILGTPNYHGSYSGILKNALDHLNMDYFKMKPVGLIGNSGGIVSSEPLSHLRVIVRSLLGIAVPTQIATHDSDFAKNEDGSYYLNDSEFQLRARLFVDQIVSFVNNSPYEHLK</sequence>
<protein>
    <recommendedName>
        <fullName>FMN-dependent NADPH-azoreductase</fullName>
        <ecNumber>1.7.-.-</ecNumber>
    </recommendedName>
    <alternativeName>
        <fullName>NADPH-dependent flavo-azoreductase</fullName>
    </alternativeName>
    <alternativeName>
        <fullName>NADPH-flavin azoreductase</fullName>
    </alternativeName>
</protein>
<dbReference type="EC" id="1.7.-.-"/>
<dbReference type="EMBL" id="BA000033">
    <property type="protein sequence ID" value="BAB94380.1"/>
    <property type="molecule type" value="Genomic_DNA"/>
</dbReference>
<dbReference type="RefSeq" id="WP_000677261.1">
    <property type="nucleotide sequence ID" value="NC_003923.1"/>
</dbReference>
<dbReference type="SMR" id="Q7A1Q4"/>
<dbReference type="KEGG" id="sam:MW0515"/>
<dbReference type="HOGENOM" id="CLU_055322_1_2_9"/>
<dbReference type="GO" id="GO:0005829">
    <property type="term" value="C:cytosol"/>
    <property type="evidence" value="ECO:0007669"/>
    <property type="project" value="TreeGrafter"/>
</dbReference>
<dbReference type="GO" id="GO:0010181">
    <property type="term" value="F:FMN binding"/>
    <property type="evidence" value="ECO:0007669"/>
    <property type="project" value="TreeGrafter"/>
</dbReference>
<dbReference type="GO" id="GO:0016491">
    <property type="term" value="F:oxidoreductase activity"/>
    <property type="evidence" value="ECO:0007669"/>
    <property type="project" value="UniProtKB-KW"/>
</dbReference>
<dbReference type="Gene3D" id="3.40.50.360">
    <property type="match status" value="1"/>
</dbReference>
<dbReference type="InterPro" id="IPR029039">
    <property type="entry name" value="Flavoprotein-like_sf"/>
</dbReference>
<dbReference type="InterPro" id="IPR005025">
    <property type="entry name" value="FMN_Rdtase-like_dom"/>
</dbReference>
<dbReference type="InterPro" id="IPR050712">
    <property type="entry name" value="NAD(P)H-dep_reductase"/>
</dbReference>
<dbReference type="PANTHER" id="PTHR30543">
    <property type="entry name" value="CHROMATE REDUCTASE"/>
    <property type="match status" value="1"/>
</dbReference>
<dbReference type="PANTHER" id="PTHR30543:SF21">
    <property type="entry name" value="NAD(P)H-DEPENDENT FMN REDUCTASE LOT6"/>
    <property type="match status" value="1"/>
</dbReference>
<dbReference type="Pfam" id="PF03358">
    <property type="entry name" value="FMN_red"/>
    <property type="match status" value="1"/>
</dbReference>
<dbReference type="SUPFAM" id="SSF52218">
    <property type="entry name" value="Flavoproteins"/>
    <property type="match status" value="1"/>
</dbReference>
<reference key="1">
    <citation type="journal article" date="2002" name="Lancet">
        <title>Genome and virulence determinants of high virulence community-acquired MRSA.</title>
        <authorList>
            <person name="Baba T."/>
            <person name="Takeuchi F."/>
            <person name="Kuroda M."/>
            <person name="Yuzawa H."/>
            <person name="Aoki K."/>
            <person name="Oguchi A."/>
            <person name="Nagai Y."/>
            <person name="Iwama N."/>
            <person name="Asano K."/>
            <person name="Naimi T."/>
            <person name="Kuroda H."/>
            <person name="Cui L."/>
            <person name="Yamamoto K."/>
            <person name="Hiramatsu K."/>
        </authorList>
    </citation>
    <scope>NUCLEOTIDE SEQUENCE [LARGE SCALE GENOMIC DNA]</scope>
    <source>
        <strain>MW2</strain>
    </source>
</reference>
<proteinExistence type="inferred from homology"/>
<name>AZO1_STAAW</name>
<keyword id="KW-0285">Flavoprotein</keyword>
<keyword id="KW-0288">FMN</keyword>
<keyword id="KW-0521">NADP</keyword>
<keyword id="KW-0560">Oxidoreductase</keyword>
<accession>Q7A1Q4</accession>
<feature type="chain" id="PRO_0000245996" description="FMN-dependent NADPH-azoreductase">
    <location>
        <begin position="1"/>
        <end position="188"/>
    </location>
</feature>
<comment type="function">
    <text evidence="1">Catalyzes the reductive cleavage of azo bond in aromatic azo compounds to the corresponding amines. Requires NADPH, but not NADH, as an electron donor for its activity (By similarity).</text>
</comment>
<comment type="cofactor">
    <cofactor evidence="1">
        <name>FMN</name>
        <dbReference type="ChEBI" id="CHEBI:58210"/>
    </cofactor>
</comment>
<comment type="subunit">
    <text evidence="1">Homotetramer.</text>
</comment>
<comment type="similarity">
    <text evidence="2">Belongs to the azoreductase type 2 family.</text>
</comment>